<sequence length="253" mass="28360">PVAGEENQYIAYVAYPLDLFEEGSVTNMFTSIVGNVFGFKALRALRLEDLRIPTAYVKTFQGPPHGIQVERDKLNKYGRPLLGCTIKPKLGLSAKNYGRAVYECLRGGLDFTKDDENVNSQPFMRWRDRFLFCAEALYKAQAETGEIKGHYLNATAGTCEEMMKRAIFARELGVPIVMHDYLTGGFTANTSLAHYCRDNGLLLHIHRAMHAVIDRQKNHGIHFRVLAKALRMSGGDHIHSGTVVGKLEGERDI</sequence>
<name>RBL_MAGLA</name>
<evidence type="ECO:0000250" key="1"/>
<evidence type="ECO:0000255" key="2">
    <source>
        <dbReference type="PROSITE-ProRule" id="PRU10114"/>
    </source>
</evidence>
<evidence type="ECO:0000305" key="3"/>
<accession>P30828</accession>
<organism>
    <name type="scientific">Magnolia latahensis</name>
    <name type="common">Apocynophyllum latahense</name>
    <dbReference type="NCBI Taxonomy" id="3409"/>
    <lineage>
        <taxon>Eukaryota</taxon>
        <taxon>Viridiplantae</taxon>
        <taxon>Streptophyta</taxon>
        <taxon>Embryophyta</taxon>
        <taxon>Tracheophyta</taxon>
        <taxon>Spermatophyta</taxon>
        <taxon>Magnoliopsida</taxon>
        <taxon>Magnoliidae</taxon>
        <taxon>Magnoliales</taxon>
        <taxon>Magnoliaceae</taxon>
        <taxon>Magnolia</taxon>
    </lineage>
</organism>
<proteinExistence type="inferred from homology"/>
<keyword id="KW-0113">Calvin cycle</keyword>
<keyword id="KW-0120">Carbon dioxide fixation</keyword>
<keyword id="KW-0150">Chloroplast</keyword>
<keyword id="KW-1015">Disulfide bond</keyword>
<keyword id="KW-0952">Extinct organism protein</keyword>
<keyword id="KW-0456">Lyase</keyword>
<keyword id="KW-0460">Magnesium</keyword>
<keyword id="KW-0479">Metal-binding</keyword>
<keyword id="KW-0503">Monooxygenase</keyword>
<keyword id="KW-0560">Oxidoreductase</keyword>
<keyword id="KW-0601">Photorespiration</keyword>
<keyword id="KW-0602">Photosynthesis</keyword>
<keyword id="KW-0934">Plastid</keyword>
<feature type="chain" id="PRO_0000062529" description="Ribulose bisphosphate carboxylase large chain">
    <location>
        <begin position="1" status="less than"/>
        <end position="253" status="greater than"/>
    </location>
</feature>
<feature type="active site" description="Proton acceptor" evidence="1">
    <location>
        <position position="87"/>
    </location>
</feature>
<feature type="active site" description="Proton acceptor" evidence="1">
    <location>
        <position position="206"/>
    </location>
</feature>
<feature type="binding site" description="in homodimeric partner" evidence="1">
    <location>
        <position position="35"/>
    </location>
    <ligand>
        <name>substrate</name>
    </ligand>
</feature>
<feature type="binding site" evidence="1">
    <location>
        <position position="85"/>
    </location>
    <ligand>
        <name>substrate</name>
    </ligand>
</feature>
<feature type="binding site" evidence="1">
    <location>
        <position position="89"/>
    </location>
    <ligand>
        <name>substrate</name>
    </ligand>
</feature>
<feature type="binding site" description="via carbamate group" evidence="2">
    <location>
        <position position="113"/>
    </location>
    <ligand>
        <name>Mg(2+)</name>
        <dbReference type="ChEBI" id="CHEBI:18420"/>
    </ligand>
</feature>
<feature type="binding site" evidence="2">
    <location>
        <position position="115"/>
    </location>
    <ligand>
        <name>Mg(2+)</name>
        <dbReference type="ChEBI" id="CHEBI:18420"/>
    </ligand>
</feature>
<feature type="binding site" evidence="2">
    <location>
        <position position="116"/>
    </location>
    <ligand>
        <name>Mg(2+)</name>
        <dbReference type="ChEBI" id="CHEBI:18420"/>
    </ligand>
</feature>
<feature type="binding site" evidence="1">
    <location>
        <position position="207"/>
    </location>
    <ligand>
        <name>substrate</name>
    </ligand>
</feature>
<feature type="binding site" evidence="1">
    <location>
        <position position="239"/>
    </location>
    <ligand>
        <name>substrate</name>
    </ligand>
</feature>
<feature type="site" description="Transition state stabilizer" evidence="1">
    <location>
        <position position="246"/>
    </location>
</feature>
<feature type="modified residue" description="N6-carboxylysine" evidence="2">
    <location>
        <position position="113"/>
    </location>
</feature>
<feature type="disulfide bond" description="Interchain; in linked form" evidence="1">
    <location>
        <position position="159"/>
    </location>
</feature>
<feature type="non-terminal residue">
    <location>
        <position position="1"/>
    </location>
</feature>
<feature type="non-terminal residue">
    <location>
        <position position="253"/>
    </location>
</feature>
<dbReference type="EC" id="4.1.1.39"/>
<dbReference type="EMBL" id="X54344">
    <property type="protein sequence ID" value="CAA38232.1"/>
    <property type="molecule type" value="Genomic_DNA"/>
</dbReference>
<dbReference type="SMR" id="P30828"/>
<dbReference type="GO" id="GO:0009507">
    <property type="term" value="C:chloroplast"/>
    <property type="evidence" value="ECO:0007669"/>
    <property type="project" value="UniProtKB-SubCell"/>
</dbReference>
<dbReference type="GO" id="GO:0000287">
    <property type="term" value="F:magnesium ion binding"/>
    <property type="evidence" value="ECO:0007669"/>
    <property type="project" value="InterPro"/>
</dbReference>
<dbReference type="GO" id="GO:0004497">
    <property type="term" value="F:monooxygenase activity"/>
    <property type="evidence" value="ECO:0007669"/>
    <property type="project" value="UniProtKB-KW"/>
</dbReference>
<dbReference type="GO" id="GO:0016984">
    <property type="term" value="F:ribulose-bisphosphate carboxylase activity"/>
    <property type="evidence" value="ECO:0007669"/>
    <property type="project" value="UniProtKB-EC"/>
</dbReference>
<dbReference type="GO" id="GO:0009853">
    <property type="term" value="P:photorespiration"/>
    <property type="evidence" value="ECO:0007669"/>
    <property type="project" value="UniProtKB-KW"/>
</dbReference>
<dbReference type="GO" id="GO:0019253">
    <property type="term" value="P:reductive pentose-phosphate cycle"/>
    <property type="evidence" value="ECO:0007669"/>
    <property type="project" value="UniProtKB-KW"/>
</dbReference>
<dbReference type="FunFam" id="3.20.20.110:FF:000003">
    <property type="entry name" value="Ribulose bisphosphate carboxylase large chain"/>
    <property type="match status" value="1"/>
</dbReference>
<dbReference type="Gene3D" id="3.20.20.110">
    <property type="entry name" value="Ribulose bisphosphate carboxylase, large subunit, C-terminal domain"/>
    <property type="match status" value="1"/>
</dbReference>
<dbReference type="Gene3D" id="3.30.70.150">
    <property type="entry name" value="RuBisCO large subunit, N-terminal domain"/>
    <property type="match status" value="1"/>
</dbReference>
<dbReference type="InterPro" id="IPR033966">
    <property type="entry name" value="RuBisCO"/>
</dbReference>
<dbReference type="InterPro" id="IPR020878">
    <property type="entry name" value="RuBisCo_large_chain_AS"/>
</dbReference>
<dbReference type="InterPro" id="IPR000685">
    <property type="entry name" value="RuBisCO_lsu_C"/>
</dbReference>
<dbReference type="InterPro" id="IPR036376">
    <property type="entry name" value="RuBisCO_lsu_C_sf"/>
</dbReference>
<dbReference type="InterPro" id="IPR017443">
    <property type="entry name" value="RuBisCO_lsu_fd_N"/>
</dbReference>
<dbReference type="InterPro" id="IPR036422">
    <property type="entry name" value="RuBisCO_lsu_N_sf"/>
</dbReference>
<dbReference type="NCBIfam" id="NF003252">
    <property type="entry name" value="PRK04208.1"/>
    <property type="match status" value="1"/>
</dbReference>
<dbReference type="PANTHER" id="PTHR42704">
    <property type="entry name" value="RIBULOSE BISPHOSPHATE CARBOXYLASE"/>
    <property type="match status" value="1"/>
</dbReference>
<dbReference type="PANTHER" id="PTHR42704:SF15">
    <property type="entry name" value="RIBULOSE BISPHOSPHATE CARBOXYLASE LARGE CHAIN"/>
    <property type="match status" value="1"/>
</dbReference>
<dbReference type="Pfam" id="PF00016">
    <property type="entry name" value="RuBisCO_large"/>
    <property type="match status" value="1"/>
</dbReference>
<dbReference type="Pfam" id="PF02788">
    <property type="entry name" value="RuBisCO_large_N"/>
    <property type="match status" value="1"/>
</dbReference>
<dbReference type="SUPFAM" id="SSF51649">
    <property type="entry name" value="RuBisCo, C-terminal domain"/>
    <property type="match status" value="1"/>
</dbReference>
<dbReference type="SUPFAM" id="SSF54966">
    <property type="entry name" value="RuBisCO, large subunit, small (N-terminal) domain"/>
    <property type="match status" value="1"/>
</dbReference>
<dbReference type="PROSITE" id="PS00157">
    <property type="entry name" value="RUBISCO_LARGE"/>
    <property type="match status" value="1"/>
</dbReference>
<protein>
    <recommendedName>
        <fullName>Ribulose bisphosphate carboxylase large chain</fullName>
        <shortName>RuBisCO large subunit</shortName>
        <ecNumber>4.1.1.39</ecNumber>
    </recommendedName>
</protein>
<gene>
    <name type="primary">rbcL</name>
</gene>
<comment type="function">
    <text evidence="1">RuBisCO catalyzes two reactions: the carboxylation of D-ribulose 1,5-bisphosphate, the primary event in carbon dioxide fixation, as well as the oxidative fragmentation of the pentose substrate in the photorespiration process. Both reactions occur simultaneously and in competition at the same active site (By similarity).</text>
</comment>
<comment type="catalytic activity">
    <reaction>
        <text>2 (2R)-3-phosphoglycerate + 2 H(+) = D-ribulose 1,5-bisphosphate + CO2 + H2O</text>
        <dbReference type="Rhea" id="RHEA:23124"/>
        <dbReference type="ChEBI" id="CHEBI:15377"/>
        <dbReference type="ChEBI" id="CHEBI:15378"/>
        <dbReference type="ChEBI" id="CHEBI:16526"/>
        <dbReference type="ChEBI" id="CHEBI:57870"/>
        <dbReference type="ChEBI" id="CHEBI:58272"/>
        <dbReference type="EC" id="4.1.1.39"/>
    </reaction>
</comment>
<comment type="catalytic activity">
    <reaction>
        <text>D-ribulose 1,5-bisphosphate + O2 = 2-phosphoglycolate + (2R)-3-phosphoglycerate + 2 H(+)</text>
        <dbReference type="Rhea" id="RHEA:36631"/>
        <dbReference type="ChEBI" id="CHEBI:15378"/>
        <dbReference type="ChEBI" id="CHEBI:15379"/>
        <dbReference type="ChEBI" id="CHEBI:57870"/>
        <dbReference type="ChEBI" id="CHEBI:58033"/>
        <dbReference type="ChEBI" id="CHEBI:58272"/>
    </reaction>
</comment>
<comment type="cofactor">
    <cofactor evidence="1">
        <name>Mg(2+)</name>
        <dbReference type="ChEBI" id="CHEBI:18420"/>
    </cofactor>
    <text evidence="1">Binds 1 Mg(2+) ion per subunit.</text>
</comment>
<comment type="subunit">
    <text evidence="1">Heterohexadecamer of 8 large chains and 8 small chains; disulfide-linked. The disulfide link is formed within the large subunit homodimers (By similarity).</text>
</comment>
<comment type="subcellular location">
    <subcellularLocation>
        <location>Plastid</location>
        <location>Chloroplast</location>
    </subcellularLocation>
</comment>
<comment type="PTM">
    <text evidence="1">The disulfide bond which can form in the large chain dimeric partners within the hexadecamer appears to be associated with oxidative stress and protein turnover.</text>
</comment>
<comment type="miscellaneous">
    <text evidence="1">The basic functional RuBisCO is composed of a large chain homodimer in a 'head-to-tail' conformation. In form I RuBisCO this homodimer is arranged in a barrel-like tetramer with the small subunits forming a tetrameric 'cap' on each end of the 'barrel' (By similarity).</text>
</comment>
<comment type="similarity">
    <text evidence="3">Belongs to the RuBisCO large chain family. Type I subfamily.</text>
</comment>
<comment type="caution">
    <text evidence="3">This sequence originates from a miocene fossil leaf sample.</text>
</comment>
<reference key="1">
    <citation type="journal article" date="1990" name="Nature">
        <title>Chloroplast DNA sequence from a miocene Magnolia species.</title>
        <authorList>
            <person name="Golenberg E.M."/>
            <person name="Giannasi D.E."/>
            <person name="Clegg M.T."/>
            <person name="Smiley C.J."/>
            <person name="Durbin M."/>
            <person name="Henderson D."/>
            <person name="Zurawski G."/>
        </authorList>
    </citation>
    <scope>NUCLEOTIDE SEQUENCE [GENOMIC DNA]</scope>
</reference>
<geneLocation type="chloroplast"/>